<protein>
    <recommendedName>
        <fullName evidence="1">Acetyl-coenzyme A carboxylase carboxyl transferase subunit alpha</fullName>
        <shortName evidence="1">ACCase subunit alpha</shortName>
        <shortName evidence="1">Acetyl-CoA carboxylase carboxyltransferase subunit alpha</shortName>
        <ecNumber evidence="1">2.1.3.15</ecNumber>
    </recommendedName>
</protein>
<sequence length="317" mass="35341">MAQEYLDFELPIAELEAKIESLRSVASQDDEINLDDEIARLQKKSAELTKKTFANLDAWQVSKMARHPNRPYTLDYIERIFTEFEELAGDRAFADDKAIVGGLARLDGKPVMVIGHQKGRSVKDKVKRNFGMPAPEGYRKALRLMQMAERFNLPIITFIDTPGAYPGVGAEERGQSEAIARNLREMSTLKVPVICTVIGEGGSGGALAIGVGDKVNMLQYSTYSVISPEGCASILWKSAEKASTAAEVMGLTANRLKELNLIDSIIEEPLGGAHRDFDAMAHNLKQRLLDDLKELEMLDEDNLLHRRYNRLMDYGYC</sequence>
<organism>
    <name type="scientific">Pasteurella multocida (strain Pm70)</name>
    <dbReference type="NCBI Taxonomy" id="272843"/>
    <lineage>
        <taxon>Bacteria</taxon>
        <taxon>Pseudomonadati</taxon>
        <taxon>Pseudomonadota</taxon>
        <taxon>Gammaproteobacteria</taxon>
        <taxon>Pasteurellales</taxon>
        <taxon>Pasteurellaceae</taxon>
        <taxon>Pasteurella</taxon>
    </lineage>
</organism>
<feature type="chain" id="PRO_0000223796" description="Acetyl-coenzyme A carboxylase carboxyl transferase subunit alpha">
    <location>
        <begin position="1"/>
        <end position="317"/>
    </location>
</feature>
<feature type="domain" description="CoA carboxyltransferase C-terminal" evidence="2">
    <location>
        <begin position="33"/>
        <end position="294"/>
    </location>
</feature>
<proteinExistence type="inferred from homology"/>
<gene>
    <name evidence="1" type="primary">accA</name>
    <name type="ordered locus">PM0292</name>
</gene>
<dbReference type="EC" id="2.1.3.15" evidence="1"/>
<dbReference type="EMBL" id="AE004439">
    <property type="protein sequence ID" value="AAK02376.1"/>
    <property type="molecule type" value="Genomic_DNA"/>
</dbReference>
<dbReference type="RefSeq" id="WP_005751218.1">
    <property type="nucleotide sequence ID" value="NC_002663.1"/>
</dbReference>
<dbReference type="SMR" id="Q9CNX9"/>
<dbReference type="STRING" id="272843.PM0292"/>
<dbReference type="EnsemblBacteria" id="AAK02376">
    <property type="protein sequence ID" value="AAK02376"/>
    <property type="gene ID" value="PM0292"/>
</dbReference>
<dbReference type="GeneID" id="77207643"/>
<dbReference type="KEGG" id="pmu:PM0292"/>
<dbReference type="PATRIC" id="fig|272843.6.peg.301"/>
<dbReference type="HOGENOM" id="CLU_015486_0_2_6"/>
<dbReference type="OrthoDB" id="9808023at2"/>
<dbReference type="UniPathway" id="UPA00655">
    <property type="reaction ID" value="UER00711"/>
</dbReference>
<dbReference type="Proteomes" id="UP000000809">
    <property type="component" value="Chromosome"/>
</dbReference>
<dbReference type="GO" id="GO:0009317">
    <property type="term" value="C:acetyl-CoA carboxylase complex"/>
    <property type="evidence" value="ECO:0007669"/>
    <property type="project" value="InterPro"/>
</dbReference>
<dbReference type="GO" id="GO:0003989">
    <property type="term" value="F:acetyl-CoA carboxylase activity"/>
    <property type="evidence" value="ECO:0007669"/>
    <property type="project" value="InterPro"/>
</dbReference>
<dbReference type="GO" id="GO:0005524">
    <property type="term" value="F:ATP binding"/>
    <property type="evidence" value="ECO:0007669"/>
    <property type="project" value="UniProtKB-KW"/>
</dbReference>
<dbReference type="GO" id="GO:0016743">
    <property type="term" value="F:carboxyl- or carbamoyltransferase activity"/>
    <property type="evidence" value="ECO:0007669"/>
    <property type="project" value="UniProtKB-UniRule"/>
</dbReference>
<dbReference type="GO" id="GO:0006633">
    <property type="term" value="P:fatty acid biosynthetic process"/>
    <property type="evidence" value="ECO:0007669"/>
    <property type="project" value="UniProtKB-KW"/>
</dbReference>
<dbReference type="GO" id="GO:2001295">
    <property type="term" value="P:malonyl-CoA biosynthetic process"/>
    <property type="evidence" value="ECO:0007669"/>
    <property type="project" value="UniProtKB-UniRule"/>
</dbReference>
<dbReference type="FunFam" id="3.90.226.10:FF:000008">
    <property type="entry name" value="Acetyl-coenzyme A carboxylase carboxyl transferase subunit alpha"/>
    <property type="match status" value="1"/>
</dbReference>
<dbReference type="Gene3D" id="3.90.226.10">
    <property type="entry name" value="2-enoyl-CoA Hydratase, Chain A, domain 1"/>
    <property type="match status" value="1"/>
</dbReference>
<dbReference type="HAMAP" id="MF_00823">
    <property type="entry name" value="AcetylCoA_CT_alpha"/>
    <property type="match status" value="1"/>
</dbReference>
<dbReference type="InterPro" id="IPR001095">
    <property type="entry name" value="Acetyl_CoA_COase_a_su"/>
</dbReference>
<dbReference type="InterPro" id="IPR029045">
    <property type="entry name" value="ClpP/crotonase-like_dom_sf"/>
</dbReference>
<dbReference type="InterPro" id="IPR011763">
    <property type="entry name" value="COA_CT_C"/>
</dbReference>
<dbReference type="NCBIfam" id="TIGR00513">
    <property type="entry name" value="accA"/>
    <property type="match status" value="1"/>
</dbReference>
<dbReference type="NCBIfam" id="NF041504">
    <property type="entry name" value="AccA_sub"/>
    <property type="match status" value="1"/>
</dbReference>
<dbReference type="NCBIfam" id="NF004344">
    <property type="entry name" value="PRK05724.1"/>
    <property type="match status" value="1"/>
</dbReference>
<dbReference type="PANTHER" id="PTHR42853">
    <property type="entry name" value="ACETYL-COENZYME A CARBOXYLASE CARBOXYL TRANSFERASE SUBUNIT ALPHA"/>
    <property type="match status" value="1"/>
</dbReference>
<dbReference type="PANTHER" id="PTHR42853:SF3">
    <property type="entry name" value="ACETYL-COENZYME A CARBOXYLASE CARBOXYL TRANSFERASE SUBUNIT ALPHA, CHLOROPLASTIC"/>
    <property type="match status" value="1"/>
</dbReference>
<dbReference type="Pfam" id="PF03255">
    <property type="entry name" value="ACCA"/>
    <property type="match status" value="1"/>
</dbReference>
<dbReference type="PRINTS" id="PR01069">
    <property type="entry name" value="ACCCTRFRASEA"/>
</dbReference>
<dbReference type="SUPFAM" id="SSF52096">
    <property type="entry name" value="ClpP/crotonase"/>
    <property type="match status" value="1"/>
</dbReference>
<dbReference type="PROSITE" id="PS50989">
    <property type="entry name" value="COA_CT_CTER"/>
    <property type="match status" value="1"/>
</dbReference>
<comment type="function">
    <text evidence="1">Component of the acetyl coenzyme A carboxylase (ACC) complex. First, biotin carboxylase catalyzes the carboxylation of biotin on its carrier protein (BCCP) and then the CO(2) group is transferred by the carboxyltransferase to acetyl-CoA to form malonyl-CoA.</text>
</comment>
<comment type="catalytic activity">
    <reaction evidence="1">
        <text>N(6)-carboxybiotinyl-L-lysyl-[protein] + acetyl-CoA = N(6)-biotinyl-L-lysyl-[protein] + malonyl-CoA</text>
        <dbReference type="Rhea" id="RHEA:54728"/>
        <dbReference type="Rhea" id="RHEA-COMP:10505"/>
        <dbReference type="Rhea" id="RHEA-COMP:10506"/>
        <dbReference type="ChEBI" id="CHEBI:57288"/>
        <dbReference type="ChEBI" id="CHEBI:57384"/>
        <dbReference type="ChEBI" id="CHEBI:83144"/>
        <dbReference type="ChEBI" id="CHEBI:83145"/>
        <dbReference type="EC" id="2.1.3.15"/>
    </reaction>
</comment>
<comment type="pathway">
    <text evidence="1">Lipid metabolism; malonyl-CoA biosynthesis; malonyl-CoA from acetyl-CoA: step 1/1.</text>
</comment>
<comment type="subunit">
    <text evidence="1">Acetyl-CoA carboxylase is a heterohexamer composed of biotin carboxyl carrier protein (AccB), biotin carboxylase (AccC) and two subunits each of ACCase subunit alpha (AccA) and ACCase subunit beta (AccD).</text>
</comment>
<comment type="subcellular location">
    <subcellularLocation>
        <location evidence="1">Cytoplasm</location>
    </subcellularLocation>
</comment>
<comment type="similarity">
    <text evidence="1">Belongs to the AccA family.</text>
</comment>
<keyword id="KW-0067">ATP-binding</keyword>
<keyword id="KW-0963">Cytoplasm</keyword>
<keyword id="KW-0275">Fatty acid biosynthesis</keyword>
<keyword id="KW-0276">Fatty acid metabolism</keyword>
<keyword id="KW-0444">Lipid biosynthesis</keyword>
<keyword id="KW-0443">Lipid metabolism</keyword>
<keyword id="KW-0547">Nucleotide-binding</keyword>
<keyword id="KW-1185">Reference proteome</keyword>
<keyword id="KW-0808">Transferase</keyword>
<reference key="1">
    <citation type="journal article" date="2001" name="Proc. Natl. Acad. Sci. U.S.A.">
        <title>Complete genomic sequence of Pasteurella multocida Pm70.</title>
        <authorList>
            <person name="May B.J."/>
            <person name="Zhang Q."/>
            <person name="Li L.L."/>
            <person name="Paustian M.L."/>
            <person name="Whittam T.S."/>
            <person name="Kapur V."/>
        </authorList>
    </citation>
    <scope>NUCLEOTIDE SEQUENCE [LARGE SCALE GENOMIC DNA]</scope>
    <source>
        <strain>Pm70</strain>
    </source>
</reference>
<accession>Q9CNX9</accession>
<evidence type="ECO:0000255" key="1">
    <source>
        <dbReference type="HAMAP-Rule" id="MF_00823"/>
    </source>
</evidence>
<evidence type="ECO:0000255" key="2">
    <source>
        <dbReference type="PROSITE-ProRule" id="PRU01137"/>
    </source>
</evidence>
<name>ACCA_PASMU</name>